<name>TRPC_RHOBA</name>
<proteinExistence type="inferred from homology"/>
<organism>
    <name type="scientific">Rhodopirellula baltica (strain DSM 10527 / NCIMB 13988 / SH1)</name>
    <dbReference type="NCBI Taxonomy" id="243090"/>
    <lineage>
        <taxon>Bacteria</taxon>
        <taxon>Pseudomonadati</taxon>
        <taxon>Planctomycetota</taxon>
        <taxon>Planctomycetia</taxon>
        <taxon>Pirellulales</taxon>
        <taxon>Pirellulaceae</taxon>
        <taxon>Rhodopirellula</taxon>
    </lineage>
</organism>
<comment type="catalytic activity">
    <reaction evidence="1">
        <text>1-(2-carboxyphenylamino)-1-deoxy-D-ribulose 5-phosphate + H(+) = (1S,2R)-1-C-(indol-3-yl)glycerol 3-phosphate + CO2 + H2O</text>
        <dbReference type="Rhea" id="RHEA:23476"/>
        <dbReference type="ChEBI" id="CHEBI:15377"/>
        <dbReference type="ChEBI" id="CHEBI:15378"/>
        <dbReference type="ChEBI" id="CHEBI:16526"/>
        <dbReference type="ChEBI" id="CHEBI:58613"/>
        <dbReference type="ChEBI" id="CHEBI:58866"/>
        <dbReference type="EC" id="4.1.1.48"/>
    </reaction>
</comment>
<comment type="pathway">
    <text evidence="1">Amino-acid biosynthesis; L-tryptophan biosynthesis; L-tryptophan from chorismate: step 4/5.</text>
</comment>
<comment type="similarity">
    <text evidence="1">Belongs to the TrpC family.</text>
</comment>
<feature type="chain" id="PRO_0000154246" description="Indole-3-glycerol phosphate synthase">
    <location>
        <begin position="1"/>
        <end position="259"/>
    </location>
</feature>
<evidence type="ECO:0000255" key="1">
    <source>
        <dbReference type="HAMAP-Rule" id="MF_00134"/>
    </source>
</evidence>
<protein>
    <recommendedName>
        <fullName evidence="1">Indole-3-glycerol phosphate synthase</fullName>
        <shortName evidence="1">IGPS</shortName>
        <ecNumber evidence="1">4.1.1.48</ecNumber>
    </recommendedName>
</protein>
<keyword id="KW-0028">Amino-acid biosynthesis</keyword>
<keyword id="KW-0057">Aromatic amino acid biosynthesis</keyword>
<keyword id="KW-0210">Decarboxylase</keyword>
<keyword id="KW-0456">Lyase</keyword>
<keyword id="KW-1185">Reference proteome</keyword>
<keyword id="KW-0822">Tryptophan biosynthesis</keyword>
<gene>
    <name evidence="1" type="primary">trpC</name>
    <name type="ordered locus">RB10114</name>
</gene>
<sequence length="259" mass="27985">MTILDDILVKTRQVIARDQASVPAAELVAAAKDLPVCRDFHGSLAATDQVRLIAEVKRASPSAGLIREDFDPPTIAKSYEDGGAACISVLTDEPFFQGSLDYLRQVRSAVDLPILRKDFIVDPYQLLQARVAGADAVLLIAECLSPQQLIEMDEQASELGLQTLIELYEPENLAPVLATKTRLVGINNRDLRTFETDLQHCVRLAADIPSDRLVVGESGIRTAADVAMLKAGGIKAILVGESLMRQPDITIATKALLAS</sequence>
<dbReference type="EC" id="4.1.1.48" evidence="1"/>
<dbReference type="EMBL" id="BX294150">
    <property type="protein sequence ID" value="CAD76636.1"/>
    <property type="molecule type" value="Genomic_DNA"/>
</dbReference>
<dbReference type="RefSeq" id="NP_869250.1">
    <property type="nucleotide sequence ID" value="NC_005027.1"/>
</dbReference>
<dbReference type="RefSeq" id="WP_011122620.1">
    <property type="nucleotide sequence ID" value="NC_005027.1"/>
</dbReference>
<dbReference type="SMR" id="Q7UKJ7"/>
<dbReference type="STRING" id="243090.RB10114"/>
<dbReference type="EnsemblBacteria" id="CAD76636">
    <property type="protein sequence ID" value="CAD76636"/>
    <property type="gene ID" value="RB10114"/>
</dbReference>
<dbReference type="KEGG" id="rba:RB10114"/>
<dbReference type="PATRIC" id="fig|243090.15.peg.4878"/>
<dbReference type="eggNOG" id="COG0134">
    <property type="taxonomic scope" value="Bacteria"/>
</dbReference>
<dbReference type="HOGENOM" id="CLU_034247_2_0_0"/>
<dbReference type="InParanoid" id="Q7UKJ7"/>
<dbReference type="OrthoDB" id="9804217at2"/>
<dbReference type="UniPathway" id="UPA00035">
    <property type="reaction ID" value="UER00043"/>
</dbReference>
<dbReference type="Proteomes" id="UP000001025">
    <property type="component" value="Chromosome"/>
</dbReference>
<dbReference type="GO" id="GO:0004425">
    <property type="term" value="F:indole-3-glycerol-phosphate synthase activity"/>
    <property type="evidence" value="ECO:0000318"/>
    <property type="project" value="GO_Central"/>
</dbReference>
<dbReference type="GO" id="GO:0004640">
    <property type="term" value="F:phosphoribosylanthranilate isomerase activity"/>
    <property type="evidence" value="ECO:0000318"/>
    <property type="project" value="GO_Central"/>
</dbReference>
<dbReference type="GO" id="GO:0000162">
    <property type="term" value="P:L-tryptophan biosynthetic process"/>
    <property type="evidence" value="ECO:0000318"/>
    <property type="project" value="GO_Central"/>
</dbReference>
<dbReference type="CDD" id="cd00331">
    <property type="entry name" value="IGPS"/>
    <property type="match status" value="1"/>
</dbReference>
<dbReference type="FunFam" id="3.20.20.70:FF:000024">
    <property type="entry name" value="Indole-3-glycerol phosphate synthase"/>
    <property type="match status" value="1"/>
</dbReference>
<dbReference type="Gene3D" id="3.20.20.70">
    <property type="entry name" value="Aldolase class I"/>
    <property type="match status" value="1"/>
</dbReference>
<dbReference type="HAMAP" id="MF_00134_B">
    <property type="entry name" value="IGPS_B"/>
    <property type="match status" value="1"/>
</dbReference>
<dbReference type="InterPro" id="IPR013785">
    <property type="entry name" value="Aldolase_TIM"/>
</dbReference>
<dbReference type="InterPro" id="IPR045186">
    <property type="entry name" value="Indole-3-glycerol_P_synth"/>
</dbReference>
<dbReference type="InterPro" id="IPR013798">
    <property type="entry name" value="Indole-3-glycerol_P_synth_dom"/>
</dbReference>
<dbReference type="InterPro" id="IPR001468">
    <property type="entry name" value="Indole-3-GlycerolPSynthase_CS"/>
</dbReference>
<dbReference type="InterPro" id="IPR011060">
    <property type="entry name" value="RibuloseP-bd_barrel"/>
</dbReference>
<dbReference type="NCBIfam" id="NF001377">
    <property type="entry name" value="PRK00278.2-4"/>
    <property type="match status" value="1"/>
</dbReference>
<dbReference type="PANTHER" id="PTHR22854:SF2">
    <property type="entry name" value="INDOLE-3-GLYCEROL-PHOSPHATE SYNTHASE"/>
    <property type="match status" value="1"/>
</dbReference>
<dbReference type="PANTHER" id="PTHR22854">
    <property type="entry name" value="TRYPTOPHAN BIOSYNTHESIS PROTEIN"/>
    <property type="match status" value="1"/>
</dbReference>
<dbReference type="Pfam" id="PF00218">
    <property type="entry name" value="IGPS"/>
    <property type="match status" value="1"/>
</dbReference>
<dbReference type="SUPFAM" id="SSF51366">
    <property type="entry name" value="Ribulose-phoshate binding barrel"/>
    <property type="match status" value="1"/>
</dbReference>
<dbReference type="PROSITE" id="PS00614">
    <property type="entry name" value="IGPS"/>
    <property type="match status" value="1"/>
</dbReference>
<accession>Q7UKJ7</accession>
<reference key="1">
    <citation type="journal article" date="2003" name="Proc. Natl. Acad. Sci. U.S.A.">
        <title>Complete genome sequence of the marine planctomycete Pirellula sp. strain 1.</title>
        <authorList>
            <person name="Gloeckner F.O."/>
            <person name="Kube M."/>
            <person name="Bauer M."/>
            <person name="Teeling H."/>
            <person name="Lombardot T."/>
            <person name="Ludwig W."/>
            <person name="Gade D."/>
            <person name="Beck A."/>
            <person name="Borzym K."/>
            <person name="Heitmann K."/>
            <person name="Rabus R."/>
            <person name="Schlesner H."/>
            <person name="Amann R."/>
            <person name="Reinhardt R."/>
        </authorList>
    </citation>
    <scope>NUCLEOTIDE SEQUENCE [LARGE SCALE GENOMIC DNA]</scope>
    <source>
        <strain>DSM 10527 / NCIMB 13988 / SH1</strain>
    </source>
</reference>